<protein>
    <recommendedName>
        <fullName>Protein LURP-one-related 10</fullName>
    </recommendedName>
</protein>
<proteinExistence type="evidence at transcript level"/>
<gene>
    <name type="ordered locus">At3g11740</name>
    <name type="ORF">F26K24.3</name>
</gene>
<reference key="1">
    <citation type="journal article" date="2000" name="Nature">
        <title>Sequence and analysis of chromosome 3 of the plant Arabidopsis thaliana.</title>
        <authorList>
            <person name="Salanoubat M."/>
            <person name="Lemcke K."/>
            <person name="Rieger M."/>
            <person name="Ansorge W."/>
            <person name="Unseld M."/>
            <person name="Fartmann B."/>
            <person name="Valle G."/>
            <person name="Bloecker H."/>
            <person name="Perez-Alonso M."/>
            <person name="Obermaier B."/>
            <person name="Delseny M."/>
            <person name="Boutry M."/>
            <person name="Grivell L.A."/>
            <person name="Mache R."/>
            <person name="Puigdomenech P."/>
            <person name="De Simone V."/>
            <person name="Choisne N."/>
            <person name="Artiguenave F."/>
            <person name="Robert C."/>
            <person name="Brottier P."/>
            <person name="Wincker P."/>
            <person name="Cattolico L."/>
            <person name="Weissenbach J."/>
            <person name="Saurin W."/>
            <person name="Quetier F."/>
            <person name="Schaefer M."/>
            <person name="Mueller-Auer S."/>
            <person name="Gabel C."/>
            <person name="Fuchs M."/>
            <person name="Benes V."/>
            <person name="Wurmbach E."/>
            <person name="Drzonek H."/>
            <person name="Erfle H."/>
            <person name="Jordan N."/>
            <person name="Bangert S."/>
            <person name="Wiedelmann R."/>
            <person name="Kranz H."/>
            <person name="Voss H."/>
            <person name="Holland R."/>
            <person name="Brandt P."/>
            <person name="Nyakatura G."/>
            <person name="Vezzi A."/>
            <person name="D'Angelo M."/>
            <person name="Pallavicini A."/>
            <person name="Toppo S."/>
            <person name="Simionati B."/>
            <person name="Conrad A."/>
            <person name="Hornischer K."/>
            <person name="Kauer G."/>
            <person name="Loehnert T.-H."/>
            <person name="Nordsiek G."/>
            <person name="Reichelt J."/>
            <person name="Scharfe M."/>
            <person name="Schoen O."/>
            <person name="Bargues M."/>
            <person name="Terol J."/>
            <person name="Climent J."/>
            <person name="Navarro P."/>
            <person name="Collado C."/>
            <person name="Perez-Perez A."/>
            <person name="Ottenwaelder B."/>
            <person name="Duchemin D."/>
            <person name="Cooke R."/>
            <person name="Laudie M."/>
            <person name="Berger-Llauro C."/>
            <person name="Purnelle B."/>
            <person name="Masuy D."/>
            <person name="de Haan M."/>
            <person name="Maarse A.C."/>
            <person name="Alcaraz J.-P."/>
            <person name="Cottet A."/>
            <person name="Casacuberta E."/>
            <person name="Monfort A."/>
            <person name="Argiriou A."/>
            <person name="Flores M."/>
            <person name="Liguori R."/>
            <person name="Vitale D."/>
            <person name="Mannhaupt G."/>
            <person name="Haase D."/>
            <person name="Schoof H."/>
            <person name="Rudd S."/>
            <person name="Zaccaria P."/>
            <person name="Mewes H.-W."/>
            <person name="Mayer K.F.X."/>
            <person name="Kaul S."/>
            <person name="Town C.D."/>
            <person name="Koo H.L."/>
            <person name="Tallon L.J."/>
            <person name="Jenkins J."/>
            <person name="Rooney T."/>
            <person name="Rizzo M."/>
            <person name="Walts A."/>
            <person name="Utterback T."/>
            <person name="Fujii C.Y."/>
            <person name="Shea T.P."/>
            <person name="Creasy T.H."/>
            <person name="Haas B."/>
            <person name="Maiti R."/>
            <person name="Wu D."/>
            <person name="Peterson J."/>
            <person name="Van Aken S."/>
            <person name="Pai G."/>
            <person name="Militscher J."/>
            <person name="Sellers P."/>
            <person name="Gill J.E."/>
            <person name="Feldblyum T.V."/>
            <person name="Preuss D."/>
            <person name="Lin X."/>
            <person name="Nierman W.C."/>
            <person name="Salzberg S.L."/>
            <person name="White O."/>
            <person name="Venter J.C."/>
            <person name="Fraser C.M."/>
            <person name="Kaneko T."/>
            <person name="Nakamura Y."/>
            <person name="Sato S."/>
            <person name="Kato T."/>
            <person name="Asamizu E."/>
            <person name="Sasamoto S."/>
            <person name="Kimura T."/>
            <person name="Idesawa K."/>
            <person name="Kawashima K."/>
            <person name="Kishida Y."/>
            <person name="Kiyokawa C."/>
            <person name="Kohara M."/>
            <person name="Matsumoto M."/>
            <person name="Matsuno A."/>
            <person name="Muraki A."/>
            <person name="Nakayama S."/>
            <person name="Nakazaki N."/>
            <person name="Shinpo S."/>
            <person name="Takeuchi C."/>
            <person name="Wada T."/>
            <person name="Watanabe A."/>
            <person name="Yamada M."/>
            <person name="Yasuda M."/>
            <person name="Tabata S."/>
        </authorList>
    </citation>
    <scope>NUCLEOTIDE SEQUENCE [LARGE SCALE GENOMIC DNA]</scope>
    <source>
        <strain>cv. Columbia</strain>
    </source>
</reference>
<reference key="2">
    <citation type="journal article" date="2017" name="Plant J.">
        <title>Araport11: a complete reannotation of the Arabidopsis thaliana reference genome.</title>
        <authorList>
            <person name="Cheng C.Y."/>
            <person name="Krishnakumar V."/>
            <person name="Chan A.P."/>
            <person name="Thibaud-Nissen F."/>
            <person name="Schobel S."/>
            <person name="Town C.D."/>
        </authorList>
    </citation>
    <scope>GENOME REANNOTATION</scope>
    <source>
        <strain>cv. Columbia</strain>
    </source>
</reference>
<reference key="3">
    <citation type="journal article" date="2004" name="Genome Res.">
        <title>Whole genome sequence comparisons and 'full-length' cDNA sequences: a combined approach to evaluate and improve Arabidopsis genome annotation.</title>
        <authorList>
            <person name="Castelli V."/>
            <person name="Aury J.-M."/>
            <person name="Jaillon O."/>
            <person name="Wincker P."/>
            <person name="Clepet C."/>
            <person name="Menard M."/>
            <person name="Cruaud C."/>
            <person name="Quetier F."/>
            <person name="Scarpelli C."/>
            <person name="Schaechter V."/>
            <person name="Temple G."/>
            <person name="Caboche M."/>
            <person name="Weissenbach J."/>
            <person name="Salanoubat M."/>
        </authorList>
    </citation>
    <scope>NUCLEOTIDE SEQUENCE [LARGE SCALE MRNA]</scope>
    <source>
        <strain>cv. Columbia</strain>
    </source>
</reference>
<sequence length="194" mass="22013">MAIVSPNFCAPYPIELGIVRKVMTLTDGNFAVTDVNGNLLFKVKEPLFSISDKRILLDAYDTPILTLRENKVSLHDRWLVYRGKSTDQSDLLYTLKRSSMIQIMKPKLDIFLAHNKEMKICDFHVKGSWIDRSCVVYAGKSDAIVAQMHKKHTAQSILIGKSNFSVTVYPNVDFAFIVSLIVILDDINREDSED</sequence>
<evidence type="ECO:0000250" key="1"/>
<evidence type="ECO:0000305" key="2"/>
<dbReference type="EMBL" id="AC016795">
    <property type="protein sequence ID" value="AAF23190.1"/>
    <property type="status" value="ALT_SEQ"/>
    <property type="molecule type" value="Genomic_DNA"/>
</dbReference>
<dbReference type="EMBL" id="CP002686">
    <property type="protein sequence ID" value="AEE75091.1"/>
    <property type="molecule type" value="Genomic_DNA"/>
</dbReference>
<dbReference type="EMBL" id="BX825412">
    <property type="status" value="NOT_ANNOTATED_CDS"/>
    <property type="molecule type" value="mRNA"/>
</dbReference>
<dbReference type="RefSeq" id="NP_187780.2">
    <property type="nucleotide sequence ID" value="NM_112006.4"/>
</dbReference>
<dbReference type="SMR" id="Q9SF24"/>
<dbReference type="STRING" id="3702.Q9SF24"/>
<dbReference type="PaxDb" id="3702-AT3G11740.1"/>
<dbReference type="ProteomicsDB" id="238443"/>
<dbReference type="EnsemblPlants" id="AT3G11740.1">
    <property type="protein sequence ID" value="AT3G11740.1"/>
    <property type="gene ID" value="AT3G11740"/>
</dbReference>
<dbReference type="GeneID" id="820346"/>
<dbReference type="Gramene" id="AT3G11740.1">
    <property type="protein sequence ID" value="AT3G11740.1"/>
    <property type="gene ID" value="AT3G11740"/>
</dbReference>
<dbReference type="KEGG" id="ath:AT3G11740"/>
<dbReference type="Araport" id="AT3G11740"/>
<dbReference type="TAIR" id="AT3G11740"/>
<dbReference type="eggNOG" id="ENOG502QUU9">
    <property type="taxonomic scope" value="Eukaryota"/>
</dbReference>
<dbReference type="HOGENOM" id="CLU_063146_5_1_1"/>
<dbReference type="InParanoid" id="Q9SF24"/>
<dbReference type="OMA" id="AKMHREH"/>
<dbReference type="OrthoDB" id="97518at2759"/>
<dbReference type="PRO" id="PR:Q9SF24"/>
<dbReference type="Proteomes" id="UP000006548">
    <property type="component" value="Chromosome 3"/>
</dbReference>
<dbReference type="ExpressionAtlas" id="Q9SF24">
    <property type="expression patterns" value="baseline and differential"/>
</dbReference>
<dbReference type="Gene3D" id="2.40.160.200">
    <property type="entry name" value="LURP1-related"/>
    <property type="match status" value="1"/>
</dbReference>
<dbReference type="InterPro" id="IPR007612">
    <property type="entry name" value="LOR"/>
</dbReference>
<dbReference type="InterPro" id="IPR038595">
    <property type="entry name" value="LOR_sf"/>
</dbReference>
<dbReference type="InterPro" id="IPR025659">
    <property type="entry name" value="Tubby-like_C"/>
</dbReference>
<dbReference type="PANTHER" id="PTHR31087">
    <property type="match status" value="1"/>
</dbReference>
<dbReference type="PANTHER" id="PTHR31087:SF155">
    <property type="entry name" value="PROTEIN LURP-ONE-RELATED 10"/>
    <property type="match status" value="1"/>
</dbReference>
<dbReference type="Pfam" id="PF04525">
    <property type="entry name" value="LOR"/>
    <property type="match status" value="1"/>
</dbReference>
<dbReference type="SUPFAM" id="SSF54518">
    <property type="entry name" value="Tubby C-terminal domain-like"/>
    <property type="match status" value="1"/>
</dbReference>
<accession>Q9SF24</accession>
<organism>
    <name type="scientific">Arabidopsis thaliana</name>
    <name type="common">Mouse-ear cress</name>
    <dbReference type="NCBI Taxonomy" id="3702"/>
    <lineage>
        <taxon>Eukaryota</taxon>
        <taxon>Viridiplantae</taxon>
        <taxon>Streptophyta</taxon>
        <taxon>Embryophyta</taxon>
        <taxon>Tracheophyta</taxon>
        <taxon>Spermatophyta</taxon>
        <taxon>Magnoliopsida</taxon>
        <taxon>eudicotyledons</taxon>
        <taxon>Gunneridae</taxon>
        <taxon>Pentapetalae</taxon>
        <taxon>rosids</taxon>
        <taxon>malvids</taxon>
        <taxon>Brassicales</taxon>
        <taxon>Brassicaceae</taxon>
        <taxon>Camelineae</taxon>
        <taxon>Arabidopsis</taxon>
    </lineage>
</organism>
<comment type="function">
    <text evidence="1">Might be related to the phospholipid scramblase and tubby-like superfamily of membrane tethered transcription factors.</text>
</comment>
<comment type="similarity">
    <text evidence="2">Belongs to the LOR family.</text>
</comment>
<comment type="sequence caution" evidence="2">
    <conflict type="erroneous gene model prediction">
        <sequence resource="EMBL-CDS" id="AAF23190"/>
    </conflict>
</comment>
<keyword id="KW-1185">Reference proteome</keyword>
<name>LOR10_ARATH</name>
<feature type="chain" id="PRO_0000399242" description="Protein LURP-one-related 10">
    <location>
        <begin position="1"/>
        <end position="194"/>
    </location>
</feature>